<protein>
    <recommendedName>
        <fullName>Elongation factor Ts</fullName>
        <shortName>EF-Ts</shortName>
    </recommendedName>
</protein>
<organism>
    <name type="scientific">Coxiella burnetii (strain RSA 493 / Nine Mile phase I)</name>
    <dbReference type="NCBI Taxonomy" id="227377"/>
    <lineage>
        <taxon>Bacteria</taxon>
        <taxon>Pseudomonadati</taxon>
        <taxon>Pseudomonadota</taxon>
        <taxon>Gammaproteobacteria</taxon>
        <taxon>Legionellales</taxon>
        <taxon>Coxiellaceae</taxon>
        <taxon>Coxiella</taxon>
    </lineage>
</organism>
<sequence>MTTITPIMVKELRERTGAAVMACKKALQETNGDMEAAIDLLRKAGDAKAAKRAGKTAAEGVIVIAISKDQKKGFMAEVNSETDFVARDTNFMAFASKVAERGLAEGVSDVAATLALPIEPNSSSTIEDERKALVNRIGENIQIRRVASLSSDGVVGHYSHGGRIGVLLALDVPNPELAKGLAMHVAAFNPQAVSANQVSTEFVEKEKEIFLARAQETGKPANIIEKMVKGQVEKLLKEVSLEGQSFVKDPEKLVGDLLKAEKAKVLAFLRFEVGEGVEKESQNFADEVMAQVQGNR</sequence>
<name>EFTS_COXBU</name>
<accession>Q9X5U9</accession>
<evidence type="ECO:0000250" key="1"/>
<evidence type="ECO:0000305" key="2"/>
<reference key="1">
    <citation type="journal article" date="1999" name="Infect. Immun.">
        <title>Differential expression of translational elements by life cycle variants of Coxiella burnetii.</title>
        <authorList>
            <person name="Seshadri R."/>
            <person name="Hendrix L.R."/>
            <person name="Samuel J.E."/>
        </authorList>
    </citation>
    <scope>NUCLEOTIDE SEQUENCE [GENOMIC DNA]</scope>
    <scope>CHARACTERIZATION OF PROTEIN LEVELS</scope>
    <source>
        <strain>RSA 493 / Nine Mile phase I</strain>
    </source>
</reference>
<reference key="2">
    <citation type="journal article" date="2003" name="Proc. Natl. Acad. Sci. U.S.A.">
        <title>Complete genome sequence of the Q-fever pathogen, Coxiella burnetii.</title>
        <authorList>
            <person name="Seshadri R."/>
            <person name="Paulsen I.T."/>
            <person name="Eisen J.A."/>
            <person name="Read T.D."/>
            <person name="Nelson K.E."/>
            <person name="Nelson W.C."/>
            <person name="Ward N.L."/>
            <person name="Tettelin H."/>
            <person name="Davidsen T.M."/>
            <person name="Beanan M.J."/>
            <person name="DeBoy R.T."/>
            <person name="Daugherty S.C."/>
            <person name="Brinkac L.M."/>
            <person name="Madupu R."/>
            <person name="Dodson R.J."/>
            <person name="Khouri H.M."/>
            <person name="Lee K.H."/>
            <person name="Carty H.A."/>
            <person name="Scanlan D."/>
            <person name="Heinzen R.A."/>
            <person name="Thompson H.A."/>
            <person name="Samuel J.E."/>
            <person name="Fraser C.M."/>
            <person name="Heidelberg J.F."/>
        </authorList>
    </citation>
    <scope>NUCLEOTIDE SEQUENCE [LARGE SCALE GENOMIC DNA]</scope>
    <source>
        <strain>RSA 493 / Nine Mile phase I</strain>
    </source>
</reference>
<comment type="function">
    <text>Associates with the EF-Tu.GDP complex and induces the exchange of GDP to GTP. It remains bound to the aminoacyl-tRNA.EF-Tu.GTP complex up to the GTP hydrolysis stage on the ribosome.</text>
</comment>
<comment type="subcellular location">
    <subcellularLocation>
        <location>Cytoplasm</location>
    </subcellularLocation>
</comment>
<comment type="developmental stage">
    <text>Up-regulated more than 4 fold in the large cell variant (LCV) stage compared to the small cell variant (SCV) stage; at protein level. LCVs are thought to be more metabolically active than SCVs.</text>
</comment>
<comment type="similarity">
    <text evidence="2">Belongs to the EF-Ts family.</text>
</comment>
<keyword id="KW-0963">Cytoplasm</keyword>
<keyword id="KW-0251">Elongation factor</keyword>
<keyword id="KW-0648">Protein biosynthesis</keyword>
<keyword id="KW-1185">Reference proteome</keyword>
<feature type="chain" id="PRO_0000161113" description="Elongation factor Ts">
    <location>
        <begin position="1"/>
        <end position="296"/>
    </location>
</feature>
<feature type="region of interest" description="Involved in Mg(2+) ion dislocation from EF-Tu" evidence="1">
    <location>
        <begin position="82"/>
        <end position="85"/>
    </location>
</feature>
<dbReference type="EMBL" id="AF127534">
    <property type="protein sequence ID" value="AAD33343.1"/>
    <property type="molecule type" value="Genomic_DNA"/>
</dbReference>
<dbReference type="EMBL" id="AE016828">
    <property type="protein sequence ID" value="AAO90888.1"/>
    <property type="molecule type" value="Genomic_DNA"/>
</dbReference>
<dbReference type="RefSeq" id="NP_820374.1">
    <property type="nucleotide sequence ID" value="NC_002971.4"/>
</dbReference>
<dbReference type="RefSeq" id="WP_005772548.1">
    <property type="nucleotide sequence ID" value="NZ_CDBG01000001.1"/>
</dbReference>
<dbReference type="SMR" id="Q9X5U9"/>
<dbReference type="STRING" id="227377.CBU_1385"/>
<dbReference type="DNASU" id="1209291"/>
<dbReference type="EnsemblBacteria" id="AAO90888">
    <property type="protein sequence ID" value="AAO90888"/>
    <property type="gene ID" value="CBU_1385"/>
</dbReference>
<dbReference type="GeneID" id="1209291"/>
<dbReference type="KEGG" id="cbu:CBU_1385"/>
<dbReference type="PATRIC" id="fig|227377.7.peg.1381"/>
<dbReference type="eggNOG" id="COG0264">
    <property type="taxonomic scope" value="Bacteria"/>
</dbReference>
<dbReference type="HOGENOM" id="CLU_047155_0_2_6"/>
<dbReference type="OrthoDB" id="9808348at2"/>
<dbReference type="Proteomes" id="UP000002671">
    <property type="component" value="Chromosome"/>
</dbReference>
<dbReference type="GO" id="GO:0005737">
    <property type="term" value="C:cytoplasm"/>
    <property type="evidence" value="ECO:0007669"/>
    <property type="project" value="UniProtKB-SubCell"/>
</dbReference>
<dbReference type="GO" id="GO:0003746">
    <property type="term" value="F:translation elongation factor activity"/>
    <property type="evidence" value="ECO:0000318"/>
    <property type="project" value="GO_Central"/>
</dbReference>
<dbReference type="GO" id="GO:0006414">
    <property type="term" value="P:translational elongation"/>
    <property type="evidence" value="ECO:0000318"/>
    <property type="project" value="GO_Central"/>
</dbReference>
<dbReference type="CDD" id="cd14275">
    <property type="entry name" value="UBA_EF-Ts"/>
    <property type="match status" value="1"/>
</dbReference>
<dbReference type="FunFam" id="1.10.286.20:FF:000001">
    <property type="entry name" value="Elongation factor Ts"/>
    <property type="match status" value="1"/>
</dbReference>
<dbReference type="FunFam" id="1.10.8.10:FF:000001">
    <property type="entry name" value="Elongation factor Ts"/>
    <property type="match status" value="1"/>
</dbReference>
<dbReference type="FunFam" id="3.30.479.20:FF:000001">
    <property type="entry name" value="Elongation factor Ts"/>
    <property type="match status" value="1"/>
</dbReference>
<dbReference type="Gene3D" id="1.10.286.20">
    <property type="match status" value="1"/>
</dbReference>
<dbReference type="Gene3D" id="1.10.8.10">
    <property type="entry name" value="DNA helicase RuvA subunit, C-terminal domain"/>
    <property type="match status" value="1"/>
</dbReference>
<dbReference type="Gene3D" id="3.30.479.20">
    <property type="entry name" value="Elongation factor Ts, dimerisation domain"/>
    <property type="match status" value="2"/>
</dbReference>
<dbReference type="HAMAP" id="MF_00050">
    <property type="entry name" value="EF_Ts"/>
    <property type="match status" value="1"/>
</dbReference>
<dbReference type="InterPro" id="IPR036402">
    <property type="entry name" value="EF-Ts_dimer_sf"/>
</dbReference>
<dbReference type="InterPro" id="IPR001816">
    <property type="entry name" value="Transl_elong_EFTs/EF1B"/>
</dbReference>
<dbReference type="InterPro" id="IPR014039">
    <property type="entry name" value="Transl_elong_EFTs/EF1B_dimer"/>
</dbReference>
<dbReference type="InterPro" id="IPR018101">
    <property type="entry name" value="Transl_elong_Ts_CS"/>
</dbReference>
<dbReference type="InterPro" id="IPR009060">
    <property type="entry name" value="UBA-like_sf"/>
</dbReference>
<dbReference type="NCBIfam" id="TIGR00116">
    <property type="entry name" value="tsf"/>
    <property type="match status" value="1"/>
</dbReference>
<dbReference type="PANTHER" id="PTHR11741">
    <property type="entry name" value="ELONGATION FACTOR TS"/>
    <property type="match status" value="1"/>
</dbReference>
<dbReference type="PANTHER" id="PTHR11741:SF0">
    <property type="entry name" value="ELONGATION FACTOR TS, MITOCHONDRIAL"/>
    <property type="match status" value="1"/>
</dbReference>
<dbReference type="Pfam" id="PF00889">
    <property type="entry name" value="EF_TS"/>
    <property type="match status" value="1"/>
</dbReference>
<dbReference type="SUPFAM" id="SSF54713">
    <property type="entry name" value="Elongation factor Ts (EF-Ts), dimerisation domain"/>
    <property type="match status" value="2"/>
</dbReference>
<dbReference type="SUPFAM" id="SSF46934">
    <property type="entry name" value="UBA-like"/>
    <property type="match status" value="1"/>
</dbReference>
<dbReference type="PROSITE" id="PS01126">
    <property type="entry name" value="EF_TS_1"/>
    <property type="match status" value="1"/>
</dbReference>
<dbReference type="PROSITE" id="PS01127">
    <property type="entry name" value="EF_TS_2"/>
    <property type="match status" value="1"/>
</dbReference>
<gene>
    <name type="primary">tsf</name>
    <name type="ordered locus">CBU_1385</name>
</gene>
<proteinExistence type="evidence at protein level"/>